<gene>
    <name type="primary">mauM</name>
    <name type="ordered locus">Mfla_0554</name>
</gene>
<protein>
    <recommendedName>
        <fullName>Methylamine utilization ferredoxin-type protein MauM</fullName>
    </recommendedName>
</protein>
<accession>Q50423</accession>
<accession>Q1H3W3</accession>
<accession>Q50427</accession>
<proteinExistence type="predicted"/>
<sequence length="234" mass="25199">MMAEEGNRNKSTSTIEKPERRLMFKQLTRRVGVAVVGSIFGSALLRSRPAPAATVLRPPGALAEKDFQSACVRCGLCVEDCPFDILKLASWADPAPMGTPFFTARDEPCRMCQDIPCVRACPTGALNPLLTDIRKADMGVAVLVDHETCLNYKGLNCSICVRVCPIRGEAISLKPIQNERGLLQIPTVDSTKCTGCGTCEKHCVLSEAAIRVLPRELGLGVSGANSAGRTPVWK</sequence>
<feature type="chain" id="PRO_0000159286" description="Methylamine utilization ferredoxin-type protein MauM">
    <location>
        <begin position="1"/>
        <end position="234"/>
    </location>
</feature>
<feature type="domain" description="4Fe-4S ferredoxin-type 1" evidence="2">
    <location>
        <begin position="61"/>
        <end position="91"/>
    </location>
</feature>
<feature type="domain" description="4Fe-4S ferredoxin-type 2" evidence="2">
    <location>
        <begin position="98"/>
        <end position="131"/>
    </location>
</feature>
<feature type="domain" description="4Fe-4S ferredoxin-type 3" evidence="2">
    <location>
        <begin position="140"/>
        <end position="176"/>
    </location>
</feature>
<feature type="domain" description="4Fe-4S ferredoxin-type 4" evidence="2">
    <location>
        <begin position="184"/>
        <end position="215"/>
    </location>
</feature>
<feature type="binding site" evidence="1">
    <location>
        <position position="71"/>
    </location>
    <ligand>
        <name>[4Fe-4S] cluster</name>
        <dbReference type="ChEBI" id="CHEBI:49883"/>
        <label>1</label>
    </ligand>
</feature>
<feature type="binding site" evidence="1">
    <location>
        <position position="74"/>
    </location>
    <ligand>
        <name>[4Fe-4S] cluster</name>
        <dbReference type="ChEBI" id="CHEBI:49883"/>
        <label>1</label>
    </ligand>
</feature>
<feature type="binding site" evidence="1">
    <location>
        <position position="77"/>
    </location>
    <ligand>
        <name>[4Fe-4S] cluster</name>
        <dbReference type="ChEBI" id="CHEBI:49883"/>
        <label>1</label>
    </ligand>
</feature>
<feature type="binding site" evidence="1">
    <location>
        <position position="81"/>
    </location>
    <ligand>
        <name>[4Fe-4S] cluster</name>
        <dbReference type="ChEBI" id="CHEBI:49883"/>
        <label>1</label>
    </ligand>
</feature>
<feature type="binding site" evidence="1">
    <location>
        <position position="109"/>
    </location>
    <ligand>
        <name>[4Fe-4S] cluster</name>
        <dbReference type="ChEBI" id="CHEBI:49883"/>
        <label>2</label>
    </ligand>
</feature>
<feature type="binding site" evidence="1">
    <location>
        <position position="112"/>
    </location>
    <ligand>
        <name>[4Fe-4S] cluster</name>
        <dbReference type="ChEBI" id="CHEBI:49883"/>
        <label>2</label>
    </ligand>
</feature>
<feature type="binding site" evidence="1">
    <location>
        <position position="117"/>
    </location>
    <ligand>
        <name>[4Fe-4S] cluster</name>
        <dbReference type="ChEBI" id="CHEBI:49883"/>
        <label>2</label>
    </ligand>
</feature>
<feature type="binding site" evidence="1">
    <location>
        <position position="121"/>
    </location>
    <ligand>
        <name>[4Fe-4S] cluster</name>
        <dbReference type="ChEBI" id="CHEBI:49883"/>
        <label>2</label>
    </ligand>
</feature>
<feature type="binding site" evidence="1">
    <location>
        <position position="149"/>
    </location>
    <ligand>
        <name>[4Fe-4S] cluster</name>
        <dbReference type="ChEBI" id="CHEBI:49883"/>
        <label>3</label>
    </ligand>
</feature>
<feature type="binding site" evidence="1">
    <location>
        <position position="157"/>
    </location>
    <ligand>
        <name>[4Fe-4S] cluster</name>
        <dbReference type="ChEBI" id="CHEBI:49883"/>
        <label>3</label>
    </ligand>
</feature>
<feature type="binding site" evidence="1">
    <location>
        <position position="160"/>
    </location>
    <ligand>
        <name>[4Fe-4S] cluster</name>
        <dbReference type="ChEBI" id="CHEBI:49883"/>
        <label>3</label>
    </ligand>
</feature>
<feature type="binding site" evidence="1">
    <location>
        <position position="164"/>
    </location>
    <ligand>
        <name>[4Fe-4S] cluster</name>
        <dbReference type="ChEBI" id="CHEBI:49883"/>
        <label>3</label>
    </ligand>
</feature>
<feature type="binding site" evidence="1">
    <location>
        <position position="193"/>
    </location>
    <ligand>
        <name>[4Fe-4S] cluster</name>
        <dbReference type="ChEBI" id="CHEBI:49883"/>
        <label>4</label>
    </ligand>
</feature>
<feature type="binding site" evidence="1">
    <location>
        <position position="196"/>
    </location>
    <ligand>
        <name>[4Fe-4S] cluster</name>
        <dbReference type="ChEBI" id="CHEBI:49883"/>
        <label>4</label>
    </ligand>
</feature>
<feature type="binding site" evidence="1">
    <location>
        <position position="199"/>
    </location>
    <ligand>
        <name>[4Fe-4S] cluster</name>
        <dbReference type="ChEBI" id="CHEBI:49883"/>
        <label>4</label>
    </ligand>
</feature>
<feature type="binding site" evidence="1">
    <location>
        <position position="203"/>
    </location>
    <ligand>
        <name>[4Fe-4S] cluster</name>
        <dbReference type="ChEBI" id="CHEBI:49883"/>
        <label>4</label>
    </ligand>
</feature>
<keyword id="KW-0004">4Fe-4S</keyword>
<keyword id="KW-0249">Electron transport</keyword>
<keyword id="KW-0408">Iron</keyword>
<keyword id="KW-0411">Iron-sulfur</keyword>
<keyword id="KW-0479">Metal-binding</keyword>
<keyword id="KW-1185">Reference proteome</keyword>
<keyword id="KW-0677">Repeat</keyword>
<keyword id="KW-0813">Transport</keyword>
<reference key="1">
    <citation type="journal article" date="1995" name="J. Bacteriol.">
        <title>Cloning, sequencing, and mutation of a gene for azurin in Methylobacillus flagellatum KT.</title>
        <authorList>
            <person name="Gak E.R."/>
            <person name="Chistoserdov A.Y."/>
            <person name="Lidstrom M.E."/>
        </authorList>
    </citation>
    <scope>NUCLEOTIDE SEQUENCE [GENOMIC DNA]</scope>
</reference>
<reference key="2">
    <citation type="submission" date="2006-03" db="EMBL/GenBank/DDBJ databases">
        <title>Complete sequence of Methylobacillus flagellatus KT.</title>
        <authorList>
            <consortium name="US DOE Joint Genome Institute"/>
            <person name="Copeland A."/>
            <person name="Lucas S."/>
            <person name="Lapidus A."/>
            <person name="Barry K."/>
            <person name="Detter J.C."/>
            <person name="Glavina del Rio T."/>
            <person name="Hammon N."/>
            <person name="Israni S."/>
            <person name="Dalin E."/>
            <person name="Tice H."/>
            <person name="Pitluck S."/>
            <person name="Brettin T."/>
            <person name="Bruce D."/>
            <person name="Han C."/>
            <person name="Tapia R."/>
            <person name="Saunders E."/>
            <person name="Gilna P."/>
            <person name="Schmutz J."/>
            <person name="Larimer F."/>
            <person name="Land M."/>
            <person name="Kyrpides N."/>
            <person name="Anderson I."/>
            <person name="Richardson P."/>
        </authorList>
    </citation>
    <scope>NUCLEOTIDE SEQUENCE [LARGE SCALE GENOMIC DNA]</scope>
    <source>
        <strain>ATCC 51484 / DSM 6875 / VKM B-1610 / KT</strain>
    </source>
</reference>
<name>MAUM_METFK</name>
<comment type="function">
    <text evidence="3">Involved in electron transfer.</text>
</comment>
<comment type="pathway">
    <text>One-carbon metabolism; methylamine degradation.</text>
</comment>
<dbReference type="EMBL" id="L37429">
    <property type="protein sequence ID" value="AAC41472.1"/>
    <property type="molecule type" value="Genomic_DNA"/>
</dbReference>
<dbReference type="EMBL" id="L37434">
    <property type="protein sequence ID" value="AAC41476.1"/>
    <property type="molecule type" value="Genomic_DNA"/>
</dbReference>
<dbReference type="EMBL" id="CP000284">
    <property type="protein sequence ID" value="ABE48824.1"/>
    <property type="molecule type" value="Genomic_DNA"/>
</dbReference>
<dbReference type="RefSeq" id="WP_011478921.1">
    <property type="nucleotide sequence ID" value="NC_007947.1"/>
</dbReference>
<dbReference type="STRING" id="265072.Mfla_0554"/>
<dbReference type="KEGG" id="mfa:Mfla_0554"/>
<dbReference type="eggNOG" id="COG0437">
    <property type="taxonomic scope" value="Bacteria"/>
</dbReference>
<dbReference type="HOGENOM" id="CLU_077329_0_0_4"/>
<dbReference type="UniPathway" id="UPA00895"/>
<dbReference type="Proteomes" id="UP000002440">
    <property type="component" value="Chromosome"/>
</dbReference>
<dbReference type="GO" id="GO:0051539">
    <property type="term" value="F:4 iron, 4 sulfur cluster binding"/>
    <property type="evidence" value="ECO:0007669"/>
    <property type="project" value="UniProtKB-KW"/>
</dbReference>
<dbReference type="GO" id="GO:0046872">
    <property type="term" value="F:metal ion binding"/>
    <property type="evidence" value="ECO:0007669"/>
    <property type="project" value="UniProtKB-KW"/>
</dbReference>
<dbReference type="CDD" id="cd16373">
    <property type="entry name" value="DMSOR_beta_like"/>
    <property type="match status" value="1"/>
</dbReference>
<dbReference type="Gene3D" id="3.30.70.20">
    <property type="match status" value="2"/>
</dbReference>
<dbReference type="InterPro" id="IPR017896">
    <property type="entry name" value="4Fe4S_Fe-S-bd"/>
</dbReference>
<dbReference type="InterPro" id="IPR017900">
    <property type="entry name" value="4Fe4S_Fe_S_CS"/>
</dbReference>
<dbReference type="InterPro" id="IPR004494">
    <property type="entry name" value="MauM_NapG"/>
</dbReference>
<dbReference type="NCBIfam" id="TIGR00397">
    <property type="entry name" value="mauM_napG"/>
    <property type="match status" value="1"/>
</dbReference>
<dbReference type="NCBIfam" id="NF007012">
    <property type="entry name" value="PRK09476.1"/>
    <property type="match status" value="1"/>
</dbReference>
<dbReference type="Pfam" id="PF12838">
    <property type="entry name" value="Fer4_7"/>
    <property type="match status" value="2"/>
</dbReference>
<dbReference type="SUPFAM" id="SSF54862">
    <property type="entry name" value="4Fe-4S ferredoxins"/>
    <property type="match status" value="1"/>
</dbReference>
<dbReference type="PROSITE" id="PS00198">
    <property type="entry name" value="4FE4S_FER_1"/>
    <property type="match status" value="1"/>
</dbReference>
<dbReference type="PROSITE" id="PS51379">
    <property type="entry name" value="4FE4S_FER_2"/>
    <property type="match status" value="4"/>
</dbReference>
<organism>
    <name type="scientific">Methylobacillus flagellatus (strain ATCC 51484 / DSM 6875 / VKM B-1610 / KT)</name>
    <dbReference type="NCBI Taxonomy" id="265072"/>
    <lineage>
        <taxon>Bacteria</taxon>
        <taxon>Pseudomonadati</taxon>
        <taxon>Pseudomonadota</taxon>
        <taxon>Betaproteobacteria</taxon>
        <taxon>Nitrosomonadales</taxon>
        <taxon>Methylophilaceae</taxon>
        <taxon>Methylobacillus</taxon>
    </lineage>
</organism>
<evidence type="ECO:0000250" key="1"/>
<evidence type="ECO:0000255" key="2">
    <source>
        <dbReference type="PROSITE-ProRule" id="PRU00711"/>
    </source>
</evidence>
<evidence type="ECO:0000305" key="3"/>